<feature type="chain" id="PRO_1000205118" description="DNA-directed RNA polymerase subunit Rpo3">
    <location>
        <begin position="1"/>
        <end position="265"/>
    </location>
</feature>
<feature type="binding site" evidence="1">
    <location>
        <position position="203"/>
    </location>
    <ligand>
        <name>[3Fe-4S] cluster</name>
        <dbReference type="ChEBI" id="CHEBI:21137"/>
    </ligand>
</feature>
<feature type="binding site" evidence="1">
    <location>
        <position position="206"/>
    </location>
    <ligand>
        <name>[3Fe-4S] cluster</name>
        <dbReference type="ChEBI" id="CHEBI:21137"/>
    </ligand>
</feature>
<feature type="binding site" evidence="1">
    <location>
        <position position="209"/>
    </location>
    <ligand>
        <name>[3Fe-4S] cluster</name>
        <dbReference type="ChEBI" id="CHEBI:21137"/>
    </ligand>
</feature>
<accession>C3NMQ0</accession>
<dbReference type="EC" id="2.7.7.6" evidence="1"/>
<dbReference type="EMBL" id="CP001404">
    <property type="protein sequence ID" value="ACP47870.1"/>
    <property type="molecule type" value="Genomic_DNA"/>
</dbReference>
<dbReference type="RefSeq" id="WP_012714155.1">
    <property type="nucleotide sequence ID" value="NC_012623.1"/>
</dbReference>
<dbReference type="SMR" id="C3NMQ0"/>
<dbReference type="GeneID" id="7811732"/>
<dbReference type="KEGG" id="sin:YN1551_0745"/>
<dbReference type="HOGENOM" id="CLU_038421_3_1_2"/>
<dbReference type="Proteomes" id="UP000006818">
    <property type="component" value="Chromosome"/>
</dbReference>
<dbReference type="GO" id="GO:0005737">
    <property type="term" value="C:cytoplasm"/>
    <property type="evidence" value="ECO:0007669"/>
    <property type="project" value="UniProtKB-SubCell"/>
</dbReference>
<dbReference type="GO" id="GO:0000428">
    <property type="term" value="C:DNA-directed RNA polymerase complex"/>
    <property type="evidence" value="ECO:0007669"/>
    <property type="project" value="UniProtKB-KW"/>
</dbReference>
<dbReference type="GO" id="GO:0051538">
    <property type="term" value="F:3 iron, 4 sulfur cluster binding"/>
    <property type="evidence" value="ECO:0007669"/>
    <property type="project" value="UniProtKB-KW"/>
</dbReference>
<dbReference type="GO" id="GO:0003677">
    <property type="term" value="F:DNA binding"/>
    <property type="evidence" value="ECO:0007669"/>
    <property type="project" value="UniProtKB-UniRule"/>
</dbReference>
<dbReference type="GO" id="GO:0003899">
    <property type="term" value="F:DNA-directed RNA polymerase activity"/>
    <property type="evidence" value="ECO:0007669"/>
    <property type="project" value="UniProtKB-UniRule"/>
</dbReference>
<dbReference type="GO" id="GO:0046872">
    <property type="term" value="F:metal ion binding"/>
    <property type="evidence" value="ECO:0007669"/>
    <property type="project" value="UniProtKB-KW"/>
</dbReference>
<dbReference type="GO" id="GO:0046983">
    <property type="term" value="F:protein dimerization activity"/>
    <property type="evidence" value="ECO:0007669"/>
    <property type="project" value="InterPro"/>
</dbReference>
<dbReference type="GO" id="GO:0006351">
    <property type="term" value="P:DNA-templated transcription"/>
    <property type="evidence" value="ECO:0007669"/>
    <property type="project" value="UniProtKB-UniRule"/>
</dbReference>
<dbReference type="CDD" id="cd07030">
    <property type="entry name" value="RNAP_D"/>
    <property type="match status" value="1"/>
</dbReference>
<dbReference type="Gene3D" id="3.30.70.20">
    <property type="match status" value="1"/>
</dbReference>
<dbReference type="Gene3D" id="2.170.120.12">
    <property type="entry name" value="DNA-directed RNA polymerase, insert domain"/>
    <property type="match status" value="1"/>
</dbReference>
<dbReference type="Gene3D" id="3.30.1360.10">
    <property type="entry name" value="RNA polymerase, RBP11-like subunit"/>
    <property type="match status" value="1"/>
</dbReference>
<dbReference type="HAMAP" id="MF_00320">
    <property type="entry name" value="RNApol_arch_Rpo3"/>
    <property type="match status" value="1"/>
</dbReference>
<dbReference type="InterPro" id="IPR001514">
    <property type="entry name" value="DNA-dir_RNA_pol_30-40kDasu_CS"/>
</dbReference>
<dbReference type="InterPro" id="IPR011262">
    <property type="entry name" value="DNA-dir_RNA_pol_insert"/>
</dbReference>
<dbReference type="InterPro" id="IPR011263">
    <property type="entry name" value="DNA-dir_RNA_pol_RpoA/D/Rpb3"/>
</dbReference>
<dbReference type="InterPro" id="IPR036603">
    <property type="entry name" value="RBP11-like"/>
</dbReference>
<dbReference type="InterPro" id="IPR022842">
    <property type="entry name" value="RNAP_Rpo3/Rpb3/RPAC1"/>
</dbReference>
<dbReference type="InterPro" id="IPR036643">
    <property type="entry name" value="RNApol_insert_sf"/>
</dbReference>
<dbReference type="InterPro" id="IPR050518">
    <property type="entry name" value="Rpo3/RPB3_RNA_Pol_subunit"/>
</dbReference>
<dbReference type="NCBIfam" id="NF001988">
    <property type="entry name" value="PRK00783.1"/>
    <property type="match status" value="1"/>
</dbReference>
<dbReference type="PANTHER" id="PTHR11800">
    <property type="entry name" value="DNA-DIRECTED RNA POLYMERASE"/>
    <property type="match status" value="1"/>
</dbReference>
<dbReference type="PANTHER" id="PTHR11800:SF2">
    <property type="entry name" value="DNA-DIRECTED RNA POLYMERASE II SUBUNIT RPB3"/>
    <property type="match status" value="1"/>
</dbReference>
<dbReference type="Pfam" id="PF01000">
    <property type="entry name" value="RNA_pol_A_bac"/>
    <property type="match status" value="1"/>
</dbReference>
<dbReference type="Pfam" id="PF01193">
    <property type="entry name" value="RNA_pol_L"/>
    <property type="match status" value="1"/>
</dbReference>
<dbReference type="SMART" id="SM00662">
    <property type="entry name" value="RPOLD"/>
    <property type="match status" value="1"/>
</dbReference>
<dbReference type="SUPFAM" id="SSF56553">
    <property type="entry name" value="Insert subdomain of RNA polymerase alpha subunit"/>
    <property type="match status" value="1"/>
</dbReference>
<dbReference type="SUPFAM" id="SSF55257">
    <property type="entry name" value="RBP11-like subunits of RNA polymerase"/>
    <property type="match status" value="1"/>
</dbReference>
<dbReference type="PROSITE" id="PS00446">
    <property type="entry name" value="RNA_POL_D_30KD"/>
    <property type="match status" value="1"/>
</dbReference>
<proteinExistence type="inferred from homology"/>
<organism>
    <name type="scientific">Saccharolobus islandicus (strain Y.N.15.51 / Yellowstone #2)</name>
    <name type="common">Sulfolobus islandicus</name>
    <dbReference type="NCBI Taxonomy" id="419942"/>
    <lineage>
        <taxon>Archaea</taxon>
        <taxon>Thermoproteota</taxon>
        <taxon>Thermoprotei</taxon>
        <taxon>Sulfolobales</taxon>
        <taxon>Sulfolobaceae</taxon>
        <taxon>Saccharolobus</taxon>
    </lineage>
</organism>
<name>RPO3_SACI1</name>
<keyword id="KW-0003">3Fe-4S</keyword>
<keyword id="KW-0963">Cytoplasm</keyword>
<keyword id="KW-0240">DNA-directed RNA polymerase</keyword>
<keyword id="KW-0408">Iron</keyword>
<keyword id="KW-0411">Iron-sulfur</keyword>
<keyword id="KW-0479">Metal-binding</keyword>
<keyword id="KW-0548">Nucleotidyltransferase</keyword>
<keyword id="KW-0804">Transcription</keyword>
<keyword id="KW-0808">Transferase</keyword>
<sequence>MSINLLHKDDKRIDLVFEGYPLEFVNAIRRATMLYVPVMSIDDVYFIENNSPLYDEILAHRLALIPFTSEEALDTYRWPEECIECTENCEKCYTKIYIEAEALNEPKMLYSKDIKSEDPSIVPISGDIPIVLLGANQKISLEARLRLGYGKEHAKFIPVSLAIVRYYPKVEILGNCEKAATVCPEGVFELKDGKLSVKNELACTLCEECLRYCNGLIRISSIEDKYILELESVGSLKPERILLEAGKSIIRKIEELEKKLVEVIK</sequence>
<evidence type="ECO:0000255" key="1">
    <source>
        <dbReference type="HAMAP-Rule" id="MF_00320"/>
    </source>
</evidence>
<evidence type="ECO:0000305" key="2"/>
<protein>
    <recommendedName>
        <fullName evidence="1">DNA-directed RNA polymerase subunit Rpo3</fullName>
        <ecNumber evidence="1">2.7.7.6</ecNumber>
    </recommendedName>
    <alternativeName>
        <fullName evidence="1">DNA-directed RNA polymerase subunit D</fullName>
    </alternativeName>
</protein>
<reference key="1">
    <citation type="journal article" date="2009" name="Proc. Natl. Acad. Sci. U.S.A.">
        <title>Biogeography of the Sulfolobus islandicus pan-genome.</title>
        <authorList>
            <person name="Reno M.L."/>
            <person name="Held N.L."/>
            <person name="Fields C.J."/>
            <person name="Burke P.V."/>
            <person name="Whitaker R.J."/>
        </authorList>
    </citation>
    <scope>NUCLEOTIDE SEQUENCE [LARGE SCALE GENOMIC DNA]</scope>
    <source>
        <strain>Y.N.15.51 / Yellowstone #2</strain>
    </source>
</reference>
<gene>
    <name evidence="1" type="primary">rpo3</name>
    <name evidence="1" type="synonym">rpoD</name>
    <name type="ordered locus">YN1551_0745</name>
</gene>
<comment type="function">
    <text evidence="1">DNA-dependent RNA polymerase (RNAP) catalyzes the transcription of DNA into RNA using the four ribonucleoside triphosphates as substrates.</text>
</comment>
<comment type="catalytic activity">
    <reaction evidence="1">
        <text>RNA(n) + a ribonucleoside 5'-triphosphate = RNA(n+1) + diphosphate</text>
        <dbReference type="Rhea" id="RHEA:21248"/>
        <dbReference type="Rhea" id="RHEA-COMP:14527"/>
        <dbReference type="Rhea" id="RHEA-COMP:17342"/>
        <dbReference type="ChEBI" id="CHEBI:33019"/>
        <dbReference type="ChEBI" id="CHEBI:61557"/>
        <dbReference type="ChEBI" id="CHEBI:140395"/>
        <dbReference type="EC" id="2.7.7.6"/>
    </reaction>
</comment>
<comment type="cofactor">
    <cofactor evidence="1">
        <name>[3Fe-4S] cluster</name>
        <dbReference type="ChEBI" id="CHEBI:21137"/>
    </cofactor>
    <text evidence="1">Binds 1 [3Fe-4S] cluster.</text>
</comment>
<comment type="subunit">
    <text evidence="1">Part of the RNA polymerase complex.</text>
</comment>
<comment type="subcellular location">
    <subcellularLocation>
        <location evidence="1">Cytoplasm</location>
    </subcellularLocation>
</comment>
<comment type="similarity">
    <text evidence="1">Belongs to the archaeal Rpo3/eukaryotic RPB3 RNA polymerase subunit family.</text>
</comment>
<comment type="caution">
    <text evidence="2">X-ray crystallography in other archaea shows this protein binds a 3Fe-4S cluster, although a 4Fe-4S cluster has been suggested to be present in this protein.</text>
</comment>